<accession>Q88R14</accession>
<comment type="function">
    <text evidence="4 6">Chemotactic-signal transducers respond to changes in the concentration of attractants and repellents in the environment, transduce a signal from the outside to the inside of the cell, and facilitate sensory adaptation through the variation of the level of methylation. McpH is a chemoreceptor that binds and responds exclusively to intermediates of the purine degradation pathway.</text>
</comment>
<comment type="subcellular location">
    <subcellularLocation>
        <location evidence="6">Cell membrane</location>
        <topology evidence="1">Multi-pass membrane protein</topology>
    </subcellularLocation>
</comment>
<comment type="disruption phenotype">
    <text evidence="4">Mutation abolishes chemotaxis toward xanthine, guanine and adenine.</text>
</comment>
<comment type="similarity">
    <text evidence="6">Belongs to the methyl-accepting chemotaxis (MCP) protein family.</text>
</comment>
<gene>
    <name evidence="5" type="primary">mcpH</name>
    <name evidence="7" type="ordered locus">PP_0320</name>
</gene>
<sequence length="645" mass="69825">MRIWRKSIQLQLITSMGAALLASILVVVIIFTVALNRLTDRYLVDTALPASIEAIRNDIERMLGQPLVAAADIAGNTLLRDWLAAGEDPAQAPQFIEYLTAAKQRNHAFTTLFASTETGHYYNENGLDRTLSRSNPKDKWFYGYIDSGAERFINIDIDGATGELALFIDYRVEKEGKLVGVAGMGLRMTELSKLIHDFSFGEHGKVFLVRNDGLIQVHPDAAFSGKRQLAEQLGADAAKGVMTGGESLRSSRFSRDGERYLALGLPLRDLNWTLVAEVPESEIYAQMHQAVWLTSLIGGAVALVSLLLVVLLARGLVRPIRRVTAALVQIGSGAGDLSHRLDDSRQDELGDLARGFNRFLDSQRSLIGEVLSTSERLRRAVEQVTQVVDNTAERSGRQQEMTEMVATAVHEMGLTVQDIARNAGDAAQASQSARDEALQAREVVQRSIRGIEGMSGDIGKAADAVSQLADEVASVDEVLAVIRSISEQTNLLALNAAIEAARAGEMGRGFAVVADEVRTLARRTQLSTDEVQQMIQRLKLGAGSAVSSMQAGQQATGSGVESSQRTGASLSAITDQVEHISDMNHQVATATEEQSAVTEEINRTVQGISDLARETAAEVQGCREECQALRGLADDLARQMGGFRL</sequence>
<protein>
    <recommendedName>
        <fullName evidence="6">Methyl-accepting chemotaxis protein McpH</fullName>
    </recommendedName>
</protein>
<name>MCPH_PSEPK</name>
<organism>
    <name type="scientific">Pseudomonas putida (strain ATCC 47054 / DSM 6125 / CFBP 8728 / NCIMB 11950 / KT2440)</name>
    <dbReference type="NCBI Taxonomy" id="160488"/>
    <lineage>
        <taxon>Bacteria</taxon>
        <taxon>Pseudomonadati</taxon>
        <taxon>Pseudomonadota</taxon>
        <taxon>Gammaproteobacteria</taxon>
        <taxon>Pseudomonadales</taxon>
        <taxon>Pseudomonadaceae</taxon>
        <taxon>Pseudomonas</taxon>
    </lineage>
</organism>
<evidence type="ECO:0000255" key="1"/>
<evidence type="ECO:0000255" key="2">
    <source>
        <dbReference type="PROSITE-ProRule" id="PRU00102"/>
    </source>
</evidence>
<evidence type="ECO:0000255" key="3">
    <source>
        <dbReference type="PROSITE-ProRule" id="PRU00284"/>
    </source>
</evidence>
<evidence type="ECO:0000269" key="4">
    <source>
    </source>
</evidence>
<evidence type="ECO:0000303" key="5">
    <source>
    </source>
</evidence>
<evidence type="ECO:0000305" key="6"/>
<evidence type="ECO:0000312" key="7">
    <source>
        <dbReference type="EMBL" id="AAN65951.1"/>
    </source>
</evidence>
<dbReference type="EMBL" id="AE015451">
    <property type="protein sequence ID" value="AAN65951.1"/>
    <property type="molecule type" value="Genomic_DNA"/>
</dbReference>
<dbReference type="RefSeq" id="NP_742487.1">
    <property type="nucleotide sequence ID" value="NC_002947.4"/>
</dbReference>
<dbReference type="RefSeq" id="WP_010951680.1">
    <property type="nucleotide sequence ID" value="NC_002947.4"/>
</dbReference>
<dbReference type="PDB" id="8BMV">
    <property type="method" value="X-ray"/>
    <property type="resolution" value="1.95 A"/>
    <property type="chains" value="A/B=35-289"/>
</dbReference>
<dbReference type="PDBsum" id="8BMV"/>
<dbReference type="SMR" id="Q88R14"/>
<dbReference type="STRING" id="160488.PP_0320"/>
<dbReference type="PaxDb" id="160488-PP_0320"/>
<dbReference type="GeneID" id="83677594"/>
<dbReference type="KEGG" id="ppu:PP_0320"/>
<dbReference type="PATRIC" id="fig|160488.4.peg.346"/>
<dbReference type="eggNOG" id="COG0840">
    <property type="taxonomic scope" value="Bacteria"/>
</dbReference>
<dbReference type="HOGENOM" id="CLU_000445_107_19_6"/>
<dbReference type="OrthoDB" id="2489132at2"/>
<dbReference type="PhylomeDB" id="Q88R14"/>
<dbReference type="BioCyc" id="PPUT160488:G1G01-353-MONOMER"/>
<dbReference type="Proteomes" id="UP000000556">
    <property type="component" value="Chromosome"/>
</dbReference>
<dbReference type="GO" id="GO:0005886">
    <property type="term" value="C:plasma membrane"/>
    <property type="evidence" value="ECO:0007669"/>
    <property type="project" value="UniProtKB-SubCell"/>
</dbReference>
<dbReference type="GO" id="GO:0006935">
    <property type="term" value="P:chemotaxis"/>
    <property type="evidence" value="ECO:0007669"/>
    <property type="project" value="UniProtKB-KW"/>
</dbReference>
<dbReference type="GO" id="GO:0007165">
    <property type="term" value="P:signal transduction"/>
    <property type="evidence" value="ECO:0007669"/>
    <property type="project" value="UniProtKB-KW"/>
</dbReference>
<dbReference type="CDD" id="cd06225">
    <property type="entry name" value="HAMP"/>
    <property type="match status" value="1"/>
</dbReference>
<dbReference type="CDD" id="cd11386">
    <property type="entry name" value="MCP_signal"/>
    <property type="match status" value="1"/>
</dbReference>
<dbReference type="CDD" id="cd12912">
    <property type="entry name" value="PDC2_MCP_like"/>
    <property type="match status" value="1"/>
</dbReference>
<dbReference type="FunFam" id="1.10.287.950:FF:000001">
    <property type="entry name" value="Methyl-accepting chemotaxis sensory transducer"/>
    <property type="match status" value="1"/>
</dbReference>
<dbReference type="Gene3D" id="1.10.287.950">
    <property type="entry name" value="Methyl-accepting chemotaxis protein"/>
    <property type="match status" value="1"/>
</dbReference>
<dbReference type="Gene3D" id="3.30.450.20">
    <property type="entry name" value="PAS domain"/>
    <property type="match status" value="1"/>
</dbReference>
<dbReference type="InterPro" id="IPR033479">
    <property type="entry name" value="dCache_1"/>
</dbReference>
<dbReference type="InterPro" id="IPR003660">
    <property type="entry name" value="HAMP_dom"/>
</dbReference>
<dbReference type="InterPro" id="IPR004089">
    <property type="entry name" value="MCPsignal_dom"/>
</dbReference>
<dbReference type="PANTHER" id="PTHR32089:SF112">
    <property type="entry name" value="LYSOZYME-LIKE PROTEIN-RELATED"/>
    <property type="match status" value="1"/>
</dbReference>
<dbReference type="PANTHER" id="PTHR32089">
    <property type="entry name" value="METHYL-ACCEPTING CHEMOTAXIS PROTEIN MCPB"/>
    <property type="match status" value="1"/>
</dbReference>
<dbReference type="Pfam" id="PF02743">
    <property type="entry name" value="dCache_1"/>
    <property type="match status" value="1"/>
</dbReference>
<dbReference type="Pfam" id="PF00672">
    <property type="entry name" value="HAMP"/>
    <property type="match status" value="1"/>
</dbReference>
<dbReference type="Pfam" id="PF00015">
    <property type="entry name" value="MCPsignal"/>
    <property type="match status" value="1"/>
</dbReference>
<dbReference type="SMART" id="SM00304">
    <property type="entry name" value="HAMP"/>
    <property type="match status" value="1"/>
</dbReference>
<dbReference type="SMART" id="SM00283">
    <property type="entry name" value="MA"/>
    <property type="match status" value="1"/>
</dbReference>
<dbReference type="SUPFAM" id="SSF58104">
    <property type="entry name" value="Methyl-accepting chemotaxis protein (MCP) signaling domain"/>
    <property type="match status" value="1"/>
</dbReference>
<dbReference type="PROSITE" id="PS50111">
    <property type="entry name" value="CHEMOTAXIS_TRANSDUC_2"/>
    <property type="match status" value="1"/>
</dbReference>
<dbReference type="PROSITE" id="PS50885">
    <property type="entry name" value="HAMP"/>
    <property type="match status" value="1"/>
</dbReference>
<proteinExistence type="evidence at protein level"/>
<feature type="chain" id="PRO_0000438506" description="Methyl-accepting chemotaxis protein McpH">
    <location>
        <begin position="1"/>
        <end position="645"/>
    </location>
</feature>
<feature type="transmembrane region" description="Helical" evidence="1">
    <location>
        <begin position="15"/>
        <end position="35"/>
    </location>
</feature>
<feature type="transmembrane region" description="Helical" evidence="1">
    <location>
        <begin position="291"/>
        <end position="311"/>
    </location>
</feature>
<feature type="domain" description="Cache" evidence="1">
    <location>
        <begin position="51"/>
        <end position="276"/>
    </location>
</feature>
<feature type="domain" description="HAMP" evidence="2">
    <location>
        <begin position="314"/>
        <end position="368"/>
    </location>
</feature>
<feature type="domain" description="Methyl-accepting transducer" evidence="3">
    <location>
        <begin position="373"/>
        <end position="609"/>
    </location>
</feature>
<reference key="1">
    <citation type="journal article" date="2002" name="Environ. Microbiol.">
        <title>Complete genome sequence and comparative analysis of the metabolically versatile Pseudomonas putida KT2440.</title>
        <authorList>
            <person name="Nelson K.E."/>
            <person name="Weinel C."/>
            <person name="Paulsen I.T."/>
            <person name="Dodson R.J."/>
            <person name="Hilbert H."/>
            <person name="Martins dos Santos V.A.P."/>
            <person name="Fouts D.E."/>
            <person name="Gill S.R."/>
            <person name="Pop M."/>
            <person name="Holmes M."/>
            <person name="Brinkac L.M."/>
            <person name="Beanan M.J."/>
            <person name="DeBoy R.T."/>
            <person name="Daugherty S.C."/>
            <person name="Kolonay J.F."/>
            <person name="Madupu R."/>
            <person name="Nelson W.C."/>
            <person name="White O."/>
            <person name="Peterson J.D."/>
            <person name="Khouri H.M."/>
            <person name="Hance I."/>
            <person name="Chris Lee P."/>
            <person name="Holtzapple E.K."/>
            <person name="Scanlan D."/>
            <person name="Tran K."/>
            <person name="Moazzez A."/>
            <person name="Utterback T.R."/>
            <person name="Rizzo M."/>
            <person name="Lee K."/>
            <person name="Kosack D."/>
            <person name="Moestl D."/>
            <person name="Wedler H."/>
            <person name="Lauber J."/>
            <person name="Stjepandic D."/>
            <person name="Hoheisel J."/>
            <person name="Straetz M."/>
            <person name="Heim S."/>
            <person name="Kiewitz C."/>
            <person name="Eisen J.A."/>
            <person name="Timmis K.N."/>
            <person name="Duesterhoeft A."/>
            <person name="Tuemmler B."/>
            <person name="Fraser C.M."/>
        </authorList>
    </citation>
    <scope>NUCLEOTIDE SEQUENCE [LARGE SCALE GENOMIC DNA]</scope>
    <source>
        <strain>ATCC 47054 / DSM 6125 / CFBP 8728 / NCIMB 11950 / KT2440</strain>
    </source>
</reference>
<reference key="2">
    <citation type="journal article" date="2016" name="Mol. Microbiol.">
        <title>Identification of a chemoreceptor that specifically mediates chemotaxis toward metabolizable purine derivatives.</title>
        <authorList>
            <person name="Fernandez M."/>
            <person name="Morel B."/>
            <person name="Corral-Lugo A."/>
            <person name="Krell T."/>
        </authorList>
    </citation>
    <scope>FUNCTION AS A CHEMORECEPTOR</scope>
    <scope>DISRUPTION PHENOTYPE</scope>
    <source>
        <strain>ATCC 47054 / DSM 6125 / CFBP 8728 / NCIMB 11950 / KT2440</strain>
    </source>
</reference>
<keyword id="KW-0002">3D-structure</keyword>
<keyword id="KW-1003">Cell membrane</keyword>
<keyword id="KW-0145">Chemotaxis</keyword>
<keyword id="KW-0472">Membrane</keyword>
<keyword id="KW-0488">Methylation</keyword>
<keyword id="KW-1185">Reference proteome</keyword>
<keyword id="KW-0807">Transducer</keyword>
<keyword id="KW-0812">Transmembrane</keyword>
<keyword id="KW-1133">Transmembrane helix</keyword>